<reference key="1">
    <citation type="journal article" date="2008" name="J. Bacteriol.">
        <title>The complete genome sequence of Escherichia coli DH10B: insights into the biology of a laboratory workhorse.</title>
        <authorList>
            <person name="Durfee T."/>
            <person name="Nelson R."/>
            <person name="Baldwin S."/>
            <person name="Plunkett G. III"/>
            <person name="Burland V."/>
            <person name="Mau B."/>
            <person name="Petrosino J.F."/>
            <person name="Qin X."/>
            <person name="Muzny D.M."/>
            <person name="Ayele M."/>
            <person name="Gibbs R.A."/>
            <person name="Csorgo B."/>
            <person name="Posfai G."/>
            <person name="Weinstock G.M."/>
            <person name="Blattner F.R."/>
        </authorList>
    </citation>
    <scope>NUCLEOTIDE SEQUENCE [LARGE SCALE GENOMIC DNA]</scope>
    <source>
        <strain>K12 / DH10B</strain>
    </source>
</reference>
<evidence type="ECO:0000255" key="1">
    <source>
        <dbReference type="HAMAP-Rule" id="MF_00079"/>
    </source>
</evidence>
<keyword id="KW-0028">Amino-acid biosynthesis</keyword>
<keyword id="KW-0067">ATP-binding</keyword>
<keyword id="KW-0963">Cytoplasm</keyword>
<keyword id="KW-0328">Glycosyltransferase</keyword>
<keyword id="KW-0368">Histidine biosynthesis</keyword>
<keyword id="KW-0460">Magnesium</keyword>
<keyword id="KW-0479">Metal-binding</keyword>
<keyword id="KW-0547">Nucleotide-binding</keyword>
<keyword id="KW-0808">Transferase</keyword>
<sequence>MTDNTRLRIAMQKSGRLSDDSRELLARCGIKINLHTQRLIAMAENMPIDILRVRDDDIPGLVMDGVVDLGIIGENVLEEELLNRRAQGEDPRYFTLRRLDFGGCRLSLATPVDEAWDGPLSLNGKRIATSYPHLLKRYLDQKGISFKSCLLNGSVEVAPRAGLADAICDLVSTGATLEANGLREVEVIYRSKACLIQRDGEMEESKQQLIDKLLTRIQGVIQARESKYIMMHAPTERLDEVIALLPGAERPTILPLAGDQQRVAMHMVSSETLFWETMEKLKALGASSILVLPIEKMME</sequence>
<organism>
    <name type="scientific">Escherichia coli (strain K12 / DH10B)</name>
    <dbReference type="NCBI Taxonomy" id="316385"/>
    <lineage>
        <taxon>Bacteria</taxon>
        <taxon>Pseudomonadati</taxon>
        <taxon>Pseudomonadota</taxon>
        <taxon>Gammaproteobacteria</taxon>
        <taxon>Enterobacterales</taxon>
        <taxon>Enterobacteriaceae</taxon>
        <taxon>Escherichia</taxon>
    </lineage>
</organism>
<accession>B1X6V6</accession>
<proteinExistence type="inferred from homology"/>
<protein>
    <recommendedName>
        <fullName evidence="1">ATP phosphoribosyltransferase</fullName>
        <shortName evidence="1">ATP-PRT</shortName>
        <shortName evidence="1">ATP-PRTase</shortName>
        <ecNumber evidence="1">2.4.2.17</ecNumber>
    </recommendedName>
</protein>
<feature type="chain" id="PRO_1000092730" description="ATP phosphoribosyltransferase">
    <location>
        <begin position="1"/>
        <end position="299"/>
    </location>
</feature>
<gene>
    <name evidence="1" type="primary">hisG</name>
    <name type="ordered locus">ECDH10B_2167</name>
</gene>
<name>HIS1_ECODH</name>
<dbReference type="EC" id="2.4.2.17" evidence="1"/>
<dbReference type="EMBL" id="CP000948">
    <property type="protein sequence ID" value="ACB03192.1"/>
    <property type="molecule type" value="Genomic_DNA"/>
</dbReference>
<dbReference type="RefSeq" id="WP_000131782.1">
    <property type="nucleotide sequence ID" value="NC_010473.1"/>
</dbReference>
<dbReference type="SMR" id="B1X6V6"/>
<dbReference type="GeneID" id="93775154"/>
<dbReference type="KEGG" id="ecd:ECDH10B_2167"/>
<dbReference type="HOGENOM" id="CLU_038115_1_0_6"/>
<dbReference type="UniPathway" id="UPA00031">
    <property type="reaction ID" value="UER00006"/>
</dbReference>
<dbReference type="GO" id="GO:0005737">
    <property type="term" value="C:cytoplasm"/>
    <property type="evidence" value="ECO:0007669"/>
    <property type="project" value="UniProtKB-SubCell"/>
</dbReference>
<dbReference type="GO" id="GO:0005524">
    <property type="term" value="F:ATP binding"/>
    <property type="evidence" value="ECO:0007669"/>
    <property type="project" value="UniProtKB-KW"/>
</dbReference>
<dbReference type="GO" id="GO:0003879">
    <property type="term" value="F:ATP phosphoribosyltransferase activity"/>
    <property type="evidence" value="ECO:0007669"/>
    <property type="project" value="UniProtKB-UniRule"/>
</dbReference>
<dbReference type="GO" id="GO:0000287">
    <property type="term" value="F:magnesium ion binding"/>
    <property type="evidence" value="ECO:0007669"/>
    <property type="project" value="UniProtKB-UniRule"/>
</dbReference>
<dbReference type="GO" id="GO:0000105">
    <property type="term" value="P:L-histidine biosynthetic process"/>
    <property type="evidence" value="ECO:0007669"/>
    <property type="project" value="UniProtKB-UniRule"/>
</dbReference>
<dbReference type="CDD" id="cd13592">
    <property type="entry name" value="PBP2_HisGL2"/>
    <property type="match status" value="1"/>
</dbReference>
<dbReference type="FunFam" id="3.30.70.120:FF:000002">
    <property type="entry name" value="ATP phosphoribosyltransferase"/>
    <property type="match status" value="1"/>
</dbReference>
<dbReference type="FunFam" id="3.40.190.10:FF:000008">
    <property type="entry name" value="ATP phosphoribosyltransferase"/>
    <property type="match status" value="1"/>
</dbReference>
<dbReference type="Gene3D" id="3.30.70.120">
    <property type="match status" value="1"/>
</dbReference>
<dbReference type="Gene3D" id="3.40.190.10">
    <property type="entry name" value="Periplasmic binding protein-like II"/>
    <property type="match status" value="2"/>
</dbReference>
<dbReference type="HAMAP" id="MF_00079">
    <property type="entry name" value="HisG_Long"/>
    <property type="match status" value="1"/>
</dbReference>
<dbReference type="InterPro" id="IPR020621">
    <property type="entry name" value="ATP-PRT_HisG_long"/>
</dbReference>
<dbReference type="InterPro" id="IPR013820">
    <property type="entry name" value="ATP_PRibTrfase_cat"/>
</dbReference>
<dbReference type="InterPro" id="IPR018198">
    <property type="entry name" value="ATP_PRibTrfase_CS"/>
</dbReference>
<dbReference type="InterPro" id="IPR001348">
    <property type="entry name" value="ATP_PRibTrfase_HisG"/>
</dbReference>
<dbReference type="InterPro" id="IPR013115">
    <property type="entry name" value="HisG_C"/>
</dbReference>
<dbReference type="InterPro" id="IPR011322">
    <property type="entry name" value="N-reg_PII-like_a/b"/>
</dbReference>
<dbReference type="InterPro" id="IPR015867">
    <property type="entry name" value="N-reg_PII/ATP_PRibTrfase_C"/>
</dbReference>
<dbReference type="NCBIfam" id="TIGR00070">
    <property type="entry name" value="hisG"/>
    <property type="match status" value="1"/>
</dbReference>
<dbReference type="NCBIfam" id="TIGR03455">
    <property type="entry name" value="HisG_C-term"/>
    <property type="match status" value="1"/>
</dbReference>
<dbReference type="PANTHER" id="PTHR21403:SF8">
    <property type="entry name" value="ATP PHOSPHORIBOSYLTRANSFERASE"/>
    <property type="match status" value="1"/>
</dbReference>
<dbReference type="PANTHER" id="PTHR21403">
    <property type="entry name" value="ATP PHOSPHORIBOSYLTRANSFERASE ATP-PRTASE"/>
    <property type="match status" value="1"/>
</dbReference>
<dbReference type="Pfam" id="PF01634">
    <property type="entry name" value="HisG"/>
    <property type="match status" value="1"/>
</dbReference>
<dbReference type="Pfam" id="PF08029">
    <property type="entry name" value="HisG_C"/>
    <property type="match status" value="1"/>
</dbReference>
<dbReference type="SUPFAM" id="SSF54913">
    <property type="entry name" value="GlnB-like"/>
    <property type="match status" value="1"/>
</dbReference>
<dbReference type="SUPFAM" id="SSF53850">
    <property type="entry name" value="Periplasmic binding protein-like II"/>
    <property type="match status" value="1"/>
</dbReference>
<dbReference type="PROSITE" id="PS01316">
    <property type="entry name" value="ATP_P_PHORIBOSYLTR"/>
    <property type="match status" value="1"/>
</dbReference>
<comment type="function">
    <text evidence="1">Catalyzes the condensation of ATP and 5-phosphoribose 1-diphosphate to form N'-(5'-phosphoribosyl)-ATP (PR-ATP). Has a crucial role in the pathway because the rate of histidine biosynthesis seems to be controlled primarily by regulation of HisG enzymatic activity.</text>
</comment>
<comment type="catalytic activity">
    <reaction evidence="1">
        <text>1-(5-phospho-beta-D-ribosyl)-ATP + diphosphate = 5-phospho-alpha-D-ribose 1-diphosphate + ATP</text>
        <dbReference type="Rhea" id="RHEA:18473"/>
        <dbReference type="ChEBI" id="CHEBI:30616"/>
        <dbReference type="ChEBI" id="CHEBI:33019"/>
        <dbReference type="ChEBI" id="CHEBI:58017"/>
        <dbReference type="ChEBI" id="CHEBI:73183"/>
        <dbReference type="EC" id="2.4.2.17"/>
    </reaction>
</comment>
<comment type="cofactor">
    <cofactor evidence="1">
        <name>Mg(2+)</name>
        <dbReference type="ChEBI" id="CHEBI:18420"/>
    </cofactor>
</comment>
<comment type="activity regulation">
    <text evidence="1">Feedback inhibited by histidine.</text>
</comment>
<comment type="pathway">
    <text evidence="1">Amino-acid biosynthesis; L-histidine biosynthesis; L-histidine from 5-phospho-alpha-D-ribose 1-diphosphate: step 1/9.</text>
</comment>
<comment type="subunit">
    <text evidence="1">Equilibrium between an active dimeric form, an inactive hexameric form and higher aggregates. Interconversion between the various forms is largely reversible and is influenced by the natural substrates and inhibitors of the enzyme.</text>
</comment>
<comment type="subcellular location">
    <subcellularLocation>
        <location evidence="1">Cytoplasm</location>
    </subcellularLocation>
</comment>
<comment type="similarity">
    <text evidence="1">Belongs to the ATP phosphoribosyltransferase family. Long subfamily.</text>
</comment>